<sequence length="248" mass="27172">MDIVRSPISTLNHIYDISGVEVGQHFYWQIGGFQVHGQVLITSWIVIAVLLGSATIAVRDPQTIPTGGQNFVEYILEFFRDLTRTQIGEEEYGPWVPFIGTMFLFIFVSNWSGALLPWGILKLPQGELAAPTNDINTTVALALLTSVAYFYAGLAKKGLGYFGKYIQPTPILLPINILEDFTKPLSLSFRLFGNILADELVVAVLVSPVPLVVPIPVMFLGLFTSGIQALIFATLAAAYIGESMEGHH</sequence>
<geneLocation type="chloroplast"/>
<dbReference type="EMBL" id="AY228468">
    <property type="protein sequence ID" value="AAO73997.1"/>
    <property type="molecule type" value="Genomic_DNA"/>
</dbReference>
<dbReference type="RefSeq" id="NP_817150.1">
    <property type="nucleotide sequence ID" value="NC_004677.2"/>
</dbReference>
<dbReference type="SMR" id="Q85X66"/>
<dbReference type="GeneID" id="806925"/>
<dbReference type="GO" id="GO:0009535">
    <property type="term" value="C:chloroplast thylakoid membrane"/>
    <property type="evidence" value="ECO:0007669"/>
    <property type="project" value="UniProtKB-SubCell"/>
</dbReference>
<dbReference type="GO" id="GO:0005886">
    <property type="term" value="C:plasma membrane"/>
    <property type="evidence" value="ECO:0007669"/>
    <property type="project" value="UniProtKB-UniRule"/>
</dbReference>
<dbReference type="GO" id="GO:0045259">
    <property type="term" value="C:proton-transporting ATP synthase complex"/>
    <property type="evidence" value="ECO:0007669"/>
    <property type="project" value="UniProtKB-KW"/>
</dbReference>
<dbReference type="GO" id="GO:0046933">
    <property type="term" value="F:proton-transporting ATP synthase activity, rotational mechanism"/>
    <property type="evidence" value="ECO:0007669"/>
    <property type="project" value="UniProtKB-UniRule"/>
</dbReference>
<dbReference type="CDD" id="cd00310">
    <property type="entry name" value="ATP-synt_Fo_a_6"/>
    <property type="match status" value="1"/>
</dbReference>
<dbReference type="FunFam" id="1.20.120.220:FF:000001">
    <property type="entry name" value="ATP synthase subunit a, chloroplastic"/>
    <property type="match status" value="1"/>
</dbReference>
<dbReference type="Gene3D" id="1.20.120.220">
    <property type="entry name" value="ATP synthase, F0 complex, subunit A"/>
    <property type="match status" value="1"/>
</dbReference>
<dbReference type="HAMAP" id="MF_01393">
    <property type="entry name" value="ATP_synth_a_bact"/>
    <property type="match status" value="1"/>
</dbReference>
<dbReference type="InterPro" id="IPR045082">
    <property type="entry name" value="ATP_syn_F0_a_bact/chloroplast"/>
</dbReference>
<dbReference type="InterPro" id="IPR000568">
    <property type="entry name" value="ATP_synth_F0_asu"/>
</dbReference>
<dbReference type="InterPro" id="IPR023011">
    <property type="entry name" value="ATP_synth_F0_asu_AS"/>
</dbReference>
<dbReference type="InterPro" id="IPR035908">
    <property type="entry name" value="F0_ATP_A_sf"/>
</dbReference>
<dbReference type="NCBIfam" id="TIGR01131">
    <property type="entry name" value="ATP_synt_6_or_A"/>
    <property type="match status" value="1"/>
</dbReference>
<dbReference type="PANTHER" id="PTHR42823">
    <property type="entry name" value="ATP SYNTHASE SUBUNIT A, CHLOROPLASTIC"/>
    <property type="match status" value="1"/>
</dbReference>
<dbReference type="PANTHER" id="PTHR42823:SF3">
    <property type="entry name" value="ATP SYNTHASE SUBUNIT A, CHLOROPLASTIC"/>
    <property type="match status" value="1"/>
</dbReference>
<dbReference type="Pfam" id="PF00119">
    <property type="entry name" value="ATP-synt_A"/>
    <property type="match status" value="1"/>
</dbReference>
<dbReference type="PRINTS" id="PR00123">
    <property type="entry name" value="ATPASEA"/>
</dbReference>
<dbReference type="SUPFAM" id="SSF81336">
    <property type="entry name" value="F1F0 ATP synthase subunit A"/>
    <property type="match status" value="1"/>
</dbReference>
<dbReference type="PROSITE" id="PS00449">
    <property type="entry name" value="ATPASE_A"/>
    <property type="match status" value="1"/>
</dbReference>
<evidence type="ECO:0000255" key="1">
    <source>
        <dbReference type="HAMAP-Rule" id="MF_01393"/>
    </source>
</evidence>
<proteinExistence type="inferred from homology"/>
<reference key="1">
    <citation type="submission" date="2003-02" db="EMBL/GenBank/DDBJ databases">
        <title>Complete nucleotide sequence of Pinus koraiensis.</title>
        <authorList>
            <person name="Noh E.W."/>
            <person name="Lee J.S."/>
            <person name="Choi Y.I."/>
            <person name="Han M.S."/>
            <person name="Yi Y.S."/>
            <person name="Han S.U."/>
        </authorList>
    </citation>
    <scope>NUCLEOTIDE SEQUENCE [LARGE SCALE GENOMIC DNA]</scope>
    <source>
        <strain>KangWon16</strain>
    </source>
</reference>
<keyword id="KW-0066">ATP synthesis</keyword>
<keyword id="KW-0138">CF(0)</keyword>
<keyword id="KW-0150">Chloroplast</keyword>
<keyword id="KW-0375">Hydrogen ion transport</keyword>
<keyword id="KW-0406">Ion transport</keyword>
<keyword id="KW-0472">Membrane</keyword>
<keyword id="KW-0934">Plastid</keyword>
<keyword id="KW-0793">Thylakoid</keyword>
<keyword id="KW-0812">Transmembrane</keyword>
<keyword id="KW-1133">Transmembrane helix</keyword>
<keyword id="KW-0813">Transport</keyword>
<feature type="chain" id="PRO_0000277432" description="ATP synthase subunit a, chloroplastic">
    <location>
        <begin position="1"/>
        <end position="248"/>
    </location>
</feature>
<feature type="transmembrane region" description="Helical" evidence="1">
    <location>
        <begin position="38"/>
        <end position="58"/>
    </location>
</feature>
<feature type="transmembrane region" description="Helical" evidence="1">
    <location>
        <begin position="96"/>
        <end position="116"/>
    </location>
</feature>
<feature type="transmembrane region" description="Helical" evidence="1">
    <location>
        <begin position="135"/>
        <end position="155"/>
    </location>
</feature>
<feature type="transmembrane region" description="Helical" evidence="1">
    <location>
        <begin position="200"/>
        <end position="220"/>
    </location>
</feature>
<feature type="transmembrane region" description="Helical" evidence="1">
    <location>
        <begin position="221"/>
        <end position="241"/>
    </location>
</feature>
<comment type="function">
    <text evidence="1">Key component of the proton channel; it plays a direct role in the translocation of protons across the membrane.</text>
</comment>
<comment type="subunit">
    <text evidence="1">F-type ATPases have 2 components, CF(1) - the catalytic core - and CF(0) - the membrane proton channel. CF(1) has five subunits: alpha(3), beta(3), gamma(1), delta(1), epsilon(1). CF(0) has four main subunits: a, b, b' and c.</text>
</comment>
<comment type="subcellular location">
    <subcellularLocation>
        <location evidence="1">Plastid</location>
        <location evidence="1">Chloroplast thylakoid membrane</location>
        <topology evidence="1">Multi-pass membrane protein</topology>
    </subcellularLocation>
</comment>
<comment type="similarity">
    <text evidence="1">Belongs to the ATPase A chain family.</text>
</comment>
<name>ATPI_PINKO</name>
<protein>
    <recommendedName>
        <fullName evidence="1">ATP synthase subunit a, chloroplastic</fullName>
    </recommendedName>
    <alternativeName>
        <fullName evidence="1">ATP synthase F0 sector subunit a</fullName>
    </alternativeName>
    <alternativeName>
        <fullName evidence="1">F-ATPase subunit IV</fullName>
    </alternativeName>
</protein>
<accession>Q85X66</accession>
<organism>
    <name type="scientific">Pinus koraiensis</name>
    <name type="common">Korean pine</name>
    <dbReference type="NCBI Taxonomy" id="88728"/>
    <lineage>
        <taxon>Eukaryota</taxon>
        <taxon>Viridiplantae</taxon>
        <taxon>Streptophyta</taxon>
        <taxon>Embryophyta</taxon>
        <taxon>Tracheophyta</taxon>
        <taxon>Spermatophyta</taxon>
        <taxon>Pinopsida</taxon>
        <taxon>Pinidae</taxon>
        <taxon>Conifers I</taxon>
        <taxon>Pinales</taxon>
        <taxon>Pinaceae</taxon>
        <taxon>Pinus</taxon>
        <taxon>Pinus subgen. Strobus</taxon>
    </lineage>
</organism>
<gene>
    <name evidence="1" type="primary">atpI</name>
</gene>